<dbReference type="EC" id="7.1.1.2"/>
<dbReference type="EMBL" id="Z48930">
    <property type="protein sequence ID" value="CAA88776.1"/>
    <property type="molecule type" value="Genomic_DNA"/>
</dbReference>
<dbReference type="PIR" id="S62766">
    <property type="entry name" value="S62766"/>
</dbReference>
<dbReference type="SMR" id="P48904"/>
<dbReference type="GO" id="GO:0005743">
    <property type="term" value="C:mitochondrial inner membrane"/>
    <property type="evidence" value="ECO:0007669"/>
    <property type="project" value="UniProtKB-SubCell"/>
</dbReference>
<dbReference type="GO" id="GO:0008137">
    <property type="term" value="F:NADH dehydrogenase (ubiquinone) activity"/>
    <property type="evidence" value="ECO:0007669"/>
    <property type="project" value="UniProtKB-EC"/>
</dbReference>
<dbReference type="PANTHER" id="PTHR22773">
    <property type="entry name" value="NADH DEHYDROGENASE"/>
    <property type="match status" value="1"/>
</dbReference>
<feature type="chain" id="PRO_0000117574" description="NADH-ubiquinone oxidoreductase chain 2">
    <location>
        <begin position="1" status="less than"/>
        <end position="99"/>
    </location>
</feature>
<feature type="transmembrane region" description="Helical" evidence="2">
    <location>
        <begin position="22"/>
        <end position="42"/>
    </location>
</feature>
<feature type="transmembrane region" description="Helical" evidence="2">
    <location>
        <begin position="65"/>
        <end position="85"/>
    </location>
</feature>
<feature type="non-terminal residue">
    <location>
        <position position="1"/>
    </location>
</feature>
<proteinExistence type="inferred from homology"/>
<name>NU2M_CYACA</name>
<keyword id="KW-0249">Electron transport</keyword>
<keyword id="KW-0472">Membrane</keyword>
<keyword id="KW-0496">Mitochondrion</keyword>
<keyword id="KW-0999">Mitochondrion inner membrane</keyword>
<keyword id="KW-0520">NAD</keyword>
<keyword id="KW-0679">Respiratory chain</keyword>
<keyword id="KW-1278">Translocase</keyword>
<keyword id="KW-0812">Transmembrane</keyword>
<keyword id="KW-1133">Transmembrane helix</keyword>
<keyword id="KW-0813">Transport</keyword>
<keyword id="KW-0830">Ubiquinone</keyword>
<evidence type="ECO:0000250" key="1"/>
<evidence type="ECO:0000255" key="2"/>
<evidence type="ECO:0000305" key="3"/>
<organism>
    <name type="scientific">Cyanidium caldarium</name>
    <name type="common">Red alga</name>
    <dbReference type="NCBI Taxonomy" id="2771"/>
    <lineage>
        <taxon>Eukaryota</taxon>
        <taxon>Rhodophyta</taxon>
        <taxon>Bangiophyceae</taxon>
        <taxon>Cyanidiales</taxon>
        <taxon>Cyanidiaceae</taxon>
        <taxon>Cyanidium</taxon>
    </lineage>
</organism>
<reference key="1">
    <citation type="thesis" date="1995" institute="Justus Liebig University / Frankfurt" country="Germany">
        <authorList>
            <person name="Viehmann S."/>
        </authorList>
    </citation>
    <scope>NUCLEOTIDE SEQUENCE [GENOMIC DNA]</scope>
    <source>
        <strain>RK-1</strain>
    </source>
</reference>
<protein>
    <recommendedName>
        <fullName>NADH-ubiquinone oxidoreductase chain 2</fullName>
        <ecNumber>7.1.1.2</ecNumber>
    </recommendedName>
    <alternativeName>
        <fullName>NADH dehydrogenase subunit 2</fullName>
    </alternativeName>
</protein>
<comment type="function">
    <text evidence="1">Core subunit of the mitochondrial membrane respiratory chain NADH dehydrogenase (Complex I) that is believed to belong to the minimal assembly required for catalysis. Complex I functions in the transfer of electrons from NADH to the respiratory chain. The immediate electron acceptor for the enzyme is believed to be ubiquinone (By similarity).</text>
</comment>
<comment type="catalytic activity">
    <reaction>
        <text>a ubiquinone + NADH + 5 H(+)(in) = a ubiquinol + NAD(+) + 4 H(+)(out)</text>
        <dbReference type="Rhea" id="RHEA:29091"/>
        <dbReference type="Rhea" id="RHEA-COMP:9565"/>
        <dbReference type="Rhea" id="RHEA-COMP:9566"/>
        <dbReference type="ChEBI" id="CHEBI:15378"/>
        <dbReference type="ChEBI" id="CHEBI:16389"/>
        <dbReference type="ChEBI" id="CHEBI:17976"/>
        <dbReference type="ChEBI" id="CHEBI:57540"/>
        <dbReference type="ChEBI" id="CHEBI:57945"/>
        <dbReference type="EC" id="7.1.1.2"/>
    </reaction>
</comment>
<comment type="subcellular location">
    <subcellularLocation>
        <location>Mitochondrion inner membrane</location>
        <topology>Multi-pass membrane protein</topology>
    </subcellularLocation>
</comment>
<comment type="similarity">
    <text evidence="3">Belongs to the complex I subunit 2 family.</text>
</comment>
<gene>
    <name type="primary">ND2</name>
    <name type="synonym">NAD2</name>
</gene>
<sequence>PLAGFFSKLFVFTACLQSSLYFLTFIGILLSGITAFYYIQIIKIIYFGRLNFWSIYIPIDKSNAVMISITTLLLILFFADNSIFITSNLVSLNIFHFLK</sequence>
<geneLocation type="mitochondrion"/>
<accession>P48904</accession>